<dbReference type="EC" id="2.7.11.1"/>
<dbReference type="EMBL" id="M75136">
    <property type="protein sequence ID" value="AAA88119.1"/>
    <property type="molecule type" value="Genomic_DNA"/>
</dbReference>
<dbReference type="PIR" id="H36787">
    <property type="entry name" value="TVBEI3"/>
</dbReference>
<dbReference type="RefSeq" id="NP_041107.1">
    <property type="nucleotide sequence ID" value="NC_001493.2"/>
</dbReference>
<dbReference type="SMR" id="Q00098"/>
<dbReference type="GeneID" id="1488414"/>
<dbReference type="KEGG" id="vg:1488414"/>
<dbReference type="Proteomes" id="UP000007643">
    <property type="component" value="Segment"/>
</dbReference>
<dbReference type="GO" id="GO:0005524">
    <property type="term" value="F:ATP binding"/>
    <property type="evidence" value="ECO:0007669"/>
    <property type="project" value="UniProtKB-KW"/>
</dbReference>
<dbReference type="GO" id="GO:0106310">
    <property type="term" value="F:protein serine kinase activity"/>
    <property type="evidence" value="ECO:0007669"/>
    <property type="project" value="RHEA"/>
</dbReference>
<dbReference type="GO" id="GO:0004674">
    <property type="term" value="F:protein serine/threonine kinase activity"/>
    <property type="evidence" value="ECO:0007669"/>
    <property type="project" value="UniProtKB-KW"/>
</dbReference>
<dbReference type="Gene3D" id="1.10.510.10">
    <property type="entry name" value="Transferase(Phosphotransferase) domain 1"/>
    <property type="match status" value="1"/>
</dbReference>
<dbReference type="InterPro" id="IPR011009">
    <property type="entry name" value="Kinase-like_dom_sf"/>
</dbReference>
<dbReference type="InterPro" id="IPR000719">
    <property type="entry name" value="Prot_kinase_dom"/>
</dbReference>
<dbReference type="InterPro" id="IPR008271">
    <property type="entry name" value="Ser/Thr_kinase_AS"/>
</dbReference>
<dbReference type="Pfam" id="PF00069">
    <property type="entry name" value="Pkinase"/>
    <property type="match status" value="1"/>
</dbReference>
<dbReference type="SUPFAM" id="SSF56112">
    <property type="entry name" value="Protein kinase-like (PK-like)"/>
    <property type="match status" value="1"/>
</dbReference>
<dbReference type="PROSITE" id="PS50011">
    <property type="entry name" value="PROTEIN_KINASE_DOM"/>
    <property type="match status" value="1"/>
</dbReference>
<dbReference type="PROSITE" id="PS00108">
    <property type="entry name" value="PROTEIN_KINASE_ST"/>
    <property type="match status" value="1"/>
</dbReference>
<feature type="chain" id="PRO_0000086174" description="Protein kinase ORF16">
    <location>
        <begin position="1"/>
        <end position="387"/>
    </location>
</feature>
<feature type="domain" description="Protein kinase" evidence="1">
    <location>
        <begin position="82"/>
        <end position="381"/>
    </location>
</feature>
<feature type="active site" description="Proton acceptor" evidence="1 2">
    <location>
        <position position="226"/>
    </location>
</feature>
<feature type="binding site" evidence="1">
    <location>
        <position position="122"/>
    </location>
    <ligand>
        <name>ATP</name>
        <dbReference type="ChEBI" id="CHEBI:30616"/>
    </ligand>
</feature>
<name>KR16_ICHVA</name>
<organism>
    <name type="scientific">Ictalurid herpesvirus 1 (strain Auburn)</name>
    <name type="common">IcHV-1</name>
    <name type="synonym">Channel catfish herpesvirus</name>
    <dbReference type="NCBI Taxonomy" id="766178"/>
    <lineage>
        <taxon>Viruses</taxon>
        <taxon>Duplodnaviria</taxon>
        <taxon>Heunggongvirae</taxon>
        <taxon>Peploviricota</taxon>
        <taxon>Herviviricetes</taxon>
        <taxon>Herpesvirales</taxon>
        <taxon>Alloherpesviridae</taxon>
        <taxon>Ictavirus</taxon>
        <taxon>Ictavirus ictaluridallo1</taxon>
        <taxon>Ictalurid herpesvirus 1</taxon>
    </lineage>
</organism>
<proteinExistence type="inferred from homology"/>
<accession>Q00098</accession>
<organismHost>
    <name type="scientific">Ictaluridae</name>
    <name type="common">bullhead catfishes</name>
    <dbReference type="NCBI Taxonomy" id="7996"/>
</organismHost>
<reference key="1">
    <citation type="journal article" date="1992" name="Virology">
        <title>Channel catfish virus: a new type of herpesvirus.</title>
        <authorList>
            <person name="Davison A.J."/>
        </authorList>
    </citation>
    <scope>NUCLEOTIDE SEQUENCE [LARGE SCALE GENOMIC DNA]</scope>
    <source>
        <strain>Auburn 1</strain>
    </source>
</reference>
<evidence type="ECO:0000255" key="1">
    <source>
        <dbReference type="PROSITE-ProRule" id="PRU00159"/>
    </source>
</evidence>
<evidence type="ECO:0000255" key="2">
    <source>
        <dbReference type="PROSITE-ProRule" id="PRU10027"/>
    </source>
</evidence>
<keyword id="KW-0067">ATP-binding</keyword>
<keyword id="KW-0418">Kinase</keyword>
<keyword id="KW-0547">Nucleotide-binding</keyword>
<keyword id="KW-1185">Reference proteome</keyword>
<keyword id="KW-0723">Serine/threonine-protein kinase</keyword>
<keyword id="KW-0808">Transferase</keyword>
<comment type="catalytic activity">
    <reaction>
        <text>L-seryl-[protein] + ATP = O-phospho-L-seryl-[protein] + ADP + H(+)</text>
        <dbReference type="Rhea" id="RHEA:17989"/>
        <dbReference type="Rhea" id="RHEA-COMP:9863"/>
        <dbReference type="Rhea" id="RHEA-COMP:11604"/>
        <dbReference type="ChEBI" id="CHEBI:15378"/>
        <dbReference type="ChEBI" id="CHEBI:29999"/>
        <dbReference type="ChEBI" id="CHEBI:30616"/>
        <dbReference type="ChEBI" id="CHEBI:83421"/>
        <dbReference type="ChEBI" id="CHEBI:456216"/>
        <dbReference type="EC" id="2.7.11.1"/>
    </reaction>
</comment>
<comment type="catalytic activity">
    <reaction>
        <text>L-threonyl-[protein] + ATP = O-phospho-L-threonyl-[protein] + ADP + H(+)</text>
        <dbReference type="Rhea" id="RHEA:46608"/>
        <dbReference type="Rhea" id="RHEA-COMP:11060"/>
        <dbReference type="Rhea" id="RHEA-COMP:11605"/>
        <dbReference type="ChEBI" id="CHEBI:15378"/>
        <dbReference type="ChEBI" id="CHEBI:30013"/>
        <dbReference type="ChEBI" id="CHEBI:30616"/>
        <dbReference type="ChEBI" id="CHEBI:61977"/>
        <dbReference type="ChEBI" id="CHEBI:456216"/>
        <dbReference type="EC" id="2.7.11.1"/>
    </reaction>
</comment>
<comment type="similarity">
    <text evidence="1">Belongs to the protein kinase superfamily. Ser/Thr protein kinase family.</text>
</comment>
<sequence length="387" mass="42939">MTSSGFLRAHPGVVRRCGFTRGGGLKVGPCALTDPGLAWVHAYYTDEALNWLAGLDNPLWKSGADVMDLLPGDMYVSEHVFKKILSRVGPEFFDSFIPIREVEECILFGFSPLSSTGMAALKAIDLVYGGYAPAAPGIPMEVYAWEMAYKIGAAPRLLRWVLIEGEGIEQFATLAESGLRGSLRDYIGTHPSGCKTPMDLGLVVKNVHGLVAALGMLMDSNIYHGDLKIDNLTVTEPGGPYKLIDFEFAHPFEARMRPMIEARGPITWLMPGTPACNPPEHDEETPCRDRRMKELGVTWQLGLIMLETIVLDEALVRDENMEWKRPDFKRLVSAVMEENGSLAPHDPRLLEGYLDLIGECLKRDTAVRMDLVTLMTELSLLIEKFKL</sequence>
<gene>
    <name type="primary">ORF16</name>
</gene>
<protein>
    <recommendedName>
        <fullName>Protein kinase ORF16</fullName>
        <ecNumber>2.7.11.1</ecNumber>
    </recommendedName>
</protein>